<sequence>MKFLLVAALCALVAIGSCKPTREEIKTFEQFKKVFGKVYRNAEEEARREHHFKEQLKWVEEHNGIDGVEYAINEYSDMSEQEFSFHLSGGGLNFTYMKMEAAKEPLINTYGSLPQNFDWRQKARLTRIRQQGSCGSCWAFAAAGVAESLYSIQKQQSIELSEQELVDCTYNRYDSSYQCNGCGSGYSTEAFKYMIRTGLVEEENYPYNMRTQWCNPDVEGQRYHVSGYQQLRYQSSDEDVMYTIQQHGPVVIYMHGSNNYFRNLGNGVLRGVAYNDAYTDHAVILVGWGTVQGVDYWIIRNSWGTGWGNGGYGYVERGHNSLGINNFVTYATL</sequence>
<organism>
    <name type="scientific">Blomia tropicalis</name>
    <name type="common">Mite</name>
    <dbReference type="NCBI Taxonomy" id="40697"/>
    <lineage>
        <taxon>Eukaryota</taxon>
        <taxon>Metazoa</taxon>
        <taxon>Ecdysozoa</taxon>
        <taxon>Arthropoda</taxon>
        <taxon>Chelicerata</taxon>
        <taxon>Arachnida</taxon>
        <taxon>Acari</taxon>
        <taxon>Acariformes</taxon>
        <taxon>Sarcoptiformes</taxon>
        <taxon>Astigmata</taxon>
        <taxon>Glycyphagoidea</taxon>
        <taxon>Echimyopodidae</taxon>
        <taxon>Blomia</taxon>
    </lineage>
</organism>
<comment type="function">
    <text evidence="1">Cysteine protease.</text>
</comment>
<comment type="subunit">
    <text evidence="10">Homodimer.</text>
</comment>
<comment type="allergen">
    <text evidence="9">Causes an allergic reaction in human. Binds to IgE.</text>
</comment>
<comment type="similarity">
    <text evidence="3 5 7 8">Belongs to the peptidase C1 family.</text>
</comment>
<protein>
    <recommendedName>
        <fullName evidence="12">Cysteine protease</fullName>
        <ecNumber evidence="2">3.4.22.-</ecNumber>
    </recommendedName>
    <allergenName evidence="11">Blo t 1</allergenName>
</protein>
<evidence type="ECO:0000250" key="1">
    <source>
        <dbReference type="UniProtKB" id="A5HII1"/>
    </source>
</evidence>
<evidence type="ECO:0000250" key="2">
    <source>
        <dbReference type="UniProtKB" id="P80884"/>
    </source>
</evidence>
<evidence type="ECO:0000255" key="3"/>
<evidence type="ECO:0000255" key="4">
    <source>
        <dbReference type="PROSITE-ProRule" id="PRU00498"/>
    </source>
</evidence>
<evidence type="ECO:0000255" key="5">
    <source>
        <dbReference type="PROSITE-ProRule" id="PRU10088"/>
    </source>
</evidence>
<evidence type="ECO:0000255" key="6">
    <source>
        <dbReference type="PROSITE-ProRule" id="PRU10089"/>
    </source>
</evidence>
<evidence type="ECO:0000255" key="7">
    <source>
        <dbReference type="PROSITE-ProRule" id="PRU10090"/>
    </source>
</evidence>
<evidence type="ECO:0000255" key="8">
    <source>
        <dbReference type="RuleBase" id="RU362133"/>
    </source>
</evidence>
<evidence type="ECO:0000269" key="9">
    <source>
    </source>
</evidence>
<evidence type="ECO:0000269" key="10">
    <source>
    </source>
</evidence>
<evidence type="ECO:0000303" key="11">
    <source>
    </source>
</evidence>
<evidence type="ECO:0000305" key="12"/>
<evidence type="ECO:0000305" key="13">
    <source>
    </source>
</evidence>
<evidence type="ECO:0000312" key="14">
    <source>
        <dbReference type="EMBL" id="AAQ24541.1"/>
    </source>
</evidence>
<evidence type="ECO:0007744" key="15">
    <source>
        <dbReference type="PDB" id="5JT8"/>
    </source>
</evidence>
<evidence type="ECO:0007829" key="16">
    <source>
        <dbReference type="PDB" id="5JT8"/>
    </source>
</evidence>
<proteinExistence type="evidence at protein level"/>
<reference evidence="12" key="1">
    <citation type="journal article" date="2003" name="Allergy">
        <title>Lack of human IgE cross-reactivity between mite allergens Blo t 1 and Der p 1.</title>
        <authorList>
            <person name="Cheong N."/>
            <person name="Soon S.C."/>
            <person name="Ramos J.D."/>
            <person name="Kuo I.C."/>
            <person name="Kolatkar P.R."/>
            <person name="Lee B.W."/>
            <person name="Chua K.Y."/>
            <person name="Kolortkar P.R."/>
        </authorList>
    </citation>
    <scope>NUCLEOTIDE SEQUENCE [MRNA]</scope>
    <scope>ALLERGEN</scope>
</reference>
<reference evidence="14" key="2">
    <citation type="submission" date="2003-05" db="EMBL/GenBank/DDBJ databases">
        <title>Identification and cloning of group 1 allergen from Blomia tropicalis.</title>
        <authorList>
            <person name="Chew F.T."/>
            <person name="Wang W.-L."/>
            <person name="Shang H.S."/>
            <person name="Kuay K.T."/>
            <person name="Lim S.H."/>
            <person name="Lee B.W."/>
        </authorList>
    </citation>
    <scope>NUCLEOTIDE SEQUENCE [MRNA]</scope>
</reference>
<reference evidence="15" key="3">
    <citation type="journal article" date="2017" name="Allergy">
        <title>The structure of the mite allergen Blo t 1 explains the limited antibody cross-reactivity to Der p 1.</title>
        <authorList>
            <person name="Meno K.H."/>
            <person name="Kastrup J.S."/>
            <person name="Kuo I.C."/>
            <person name="Chua K.Y."/>
            <person name="Gajhede M."/>
        </authorList>
    </citation>
    <scope>X-RAY CRYSTALLOGRAPHY (2.10 ANGSTROMS) OF 24-333</scope>
    <scope>SUBUNIT</scope>
    <scope>DISULFIDE BONDS</scope>
    <scope>GLYCOSYLATION AT ASN-93</scope>
</reference>
<name>CYSP_BLOTA</name>
<accession>A1KXI0</accession>
<dbReference type="EC" id="3.4.22.-" evidence="2"/>
<dbReference type="EMBL" id="AY291322">
    <property type="protein sequence ID" value="AAQ24541.1"/>
    <property type="molecule type" value="mRNA"/>
</dbReference>
<dbReference type="PDB" id="5JT8">
    <property type="method" value="X-ray"/>
    <property type="resolution" value="2.10 A"/>
    <property type="chains" value="A/B=1-333"/>
</dbReference>
<dbReference type="PDBsum" id="5JT8"/>
<dbReference type="SMR" id="A1KXI0"/>
<dbReference type="Allergome" id="146">
    <property type="allergen name" value="Blo t 1"/>
</dbReference>
<dbReference type="iPTMnet" id="A1KXI0"/>
<dbReference type="GO" id="GO:0008234">
    <property type="term" value="F:cysteine-type peptidase activity"/>
    <property type="evidence" value="ECO:0007669"/>
    <property type="project" value="UniProtKB-KW"/>
</dbReference>
<dbReference type="GO" id="GO:0006508">
    <property type="term" value="P:proteolysis"/>
    <property type="evidence" value="ECO:0007669"/>
    <property type="project" value="UniProtKB-KW"/>
</dbReference>
<dbReference type="CDD" id="cd02248">
    <property type="entry name" value="Peptidase_C1A"/>
    <property type="match status" value="1"/>
</dbReference>
<dbReference type="Gene3D" id="3.90.70.10">
    <property type="entry name" value="Cysteine proteinases"/>
    <property type="match status" value="1"/>
</dbReference>
<dbReference type="InterPro" id="IPR038765">
    <property type="entry name" value="Papain-like_cys_pep_sf"/>
</dbReference>
<dbReference type="InterPro" id="IPR025661">
    <property type="entry name" value="Pept_asp_AS"/>
</dbReference>
<dbReference type="InterPro" id="IPR000169">
    <property type="entry name" value="Pept_cys_AS"/>
</dbReference>
<dbReference type="InterPro" id="IPR013128">
    <property type="entry name" value="Peptidase_C1A"/>
</dbReference>
<dbReference type="InterPro" id="IPR000668">
    <property type="entry name" value="Peptidase_C1A_C"/>
</dbReference>
<dbReference type="InterPro" id="IPR039417">
    <property type="entry name" value="Peptidase_C1A_papain-like"/>
</dbReference>
<dbReference type="InterPro" id="IPR013201">
    <property type="entry name" value="Prot_inhib_I29"/>
</dbReference>
<dbReference type="PANTHER" id="PTHR12411">
    <property type="entry name" value="CYSTEINE PROTEASE FAMILY C1-RELATED"/>
    <property type="match status" value="1"/>
</dbReference>
<dbReference type="Pfam" id="PF08246">
    <property type="entry name" value="Inhibitor_I29"/>
    <property type="match status" value="1"/>
</dbReference>
<dbReference type="Pfam" id="PF00112">
    <property type="entry name" value="Peptidase_C1"/>
    <property type="match status" value="1"/>
</dbReference>
<dbReference type="PRINTS" id="PR00705">
    <property type="entry name" value="PAPAIN"/>
</dbReference>
<dbReference type="SMART" id="SM00848">
    <property type="entry name" value="Inhibitor_I29"/>
    <property type="match status" value="1"/>
</dbReference>
<dbReference type="SMART" id="SM00645">
    <property type="entry name" value="Pept_C1"/>
    <property type="match status" value="1"/>
</dbReference>
<dbReference type="SUPFAM" id="SSF54001">
    <property type="entry name" value="Cysteine proteinases"/>
    <property type="match status" value="1"/>
</dbReference>
<dbReference type="PROSITE" id="PS00640">
    <property type="entry name" value="THIOL_PROTEASE_ASN"/>
    <property type="match status" value="1"/>
</dbReference>
<dbReference type="PROSITE" id="PS00139">
    <property type="entry name" value="THIOL_PROTEASE_CYS"/>
    <property type="match status" value="1"/>
</dbReference>
<keyword id="KW-0002">3D-structure</keyword>
<keyword id="KW-0020">Allergen</keyword>
<keyword id="KW-1015">Disulfide bond</keyword>
<keyword id="KW-0325">Glycoprotein</keyword>
<keyword id="KW-0378">Hydrolase</keyword>
<keyword id="KW-0645">Protease</keyword>
<keyword id="KW-0732">Signal</keyword>
<keyword id="KW-0788">Thiol protease</keyword>
<keyword id="KW-0865">Zymogen</keyword>
<feature type="signal peptide" evidence="3">
    <location>
        <begin position="1"/>
        <end position="18"/>
    </location>
</feature>
<feature type="propeptide" id="PRO_0000444427" description="Activation peptide" evidence="13">
    <location>
        <begin position="19"/>
        <end position="108"/>
    </location>
</feature>
<feature type="chain" id="PRO_0000444428" description="Cysteine protease" evidence="13">
    <location>
        <begin position="109"/>
        <end position="333"/>
    </location>
</feature>
<feature type="active site" evidence="5">
    <location>
        <position position="137"/>
    </location>
</feature>
<feature type="active site" evidence="6">
    <location>
        <position position="281"/>
    </location>
</feature>
<feature type="active site" evidence="7">
    <location>
        <position position="301"/>
    </location>
</feature>
<feature type="glycosylation site" description="N-linked (GlcNAc...) asparagine" evidence="4 10 15">
    <location>
        <position position="93"/>
    </location>
</feature>
<feature type="disulfide bond" evidence="10 15">
    <location>
        <begin position="134"/>
        <end position="182"/>
    </location>
</feature>
<feature type="disulfide bond" evidence="10 15">
    <location>
        <begin position="168"/>
        <end position="214"/>
    </location>
</feature>
<feature type="sequence conflict" description="In Ref. 1; no nucleotide entry." evidence="12" ref="1">
    <original>S</original>
    <variation>A</variation>
    <location>
        <position position="133"/>
    </location>
</feature>
<feature type="sequence conflict" description="In Ref. 1; no nucleotide entry." evidence="12" ref="1">
    <original>E</original>
    <variation>G</variation>
    <location>
        <position position="159"/>
    </location>
</feature>
<feature type="sequence conflict" description="In Ref. 1; no nucleotide entry." evidence="12" ref="1">
    <original>S</original>
    <variation>P</variation>
    <location>
        <position position="175"/>
    </location>
</feature>
<feature type="sequence conflict" description="In Ref. 1; no nucleotide entry." evidence="12" ref="1">
    <original>E</original>
    <variation>R</variation>
    <location>
        <position position="203"/>
    </location>
</feature>
<feature type="sequence conflict" description="In Ref. 1; no nucleotide entry." evidence="12" ref="1">
    <original>N</original>
    <variation>D</variation>
    <location>
        <position position="215"/>
    </location>
</feature>
<feature type="sequence conflict" description="In Ref. 1; no nucleotide entry." evidence="12" ref="1">
    <original>Q</original>
    <variation>H</variation>
    <location>
        <position position="234"/>
    </location>
</feature>
<feature type="sequence conflict" description="In Ref. 1; no nucleotide entry." evidence="12" ref="1">
    <original>F</original>
    <variation>Y</variation>
    <location>
        <position position="327"/>
    </location>
</feature>
<feature type="helix" evidence="16">
    <location>
        <begin position="28"/>
        <end position="34"/>
    </location>
</feature>
<feature type="helix" evidence="16">
    <location>
        <begin position="42"/>
        <end position="62"/>
    </location>
</feature>
<feature type="helix" evidence="16">
    <location>
        <begin position="65"/>
        <end position="67"/>
    </location>
</feature>
<feature type="turn" evidence="16">
    <location>
        <begin position="74"/>
        <end position="77"/>
    </location>
</feature>
<feature type="helix" evidence="16">
    <location>
        <begin position="80"/>
        <end position="88"/>
    </location>
</feature>
<feature type="helix" evidence="16">
    <location>
        <begin position="94"/>
        <end position="100"/>
    </location>
</feature>
<feature type="helix" evidence="16">
    <location>
        <begin position="119"/>
        <end position="122"/>
    </location>
</feature>
<feature type="helix" evidence="16">
    <location>
        <begin position="137"/>
        <end position="154"/>
    </location>
</feature>
<feature type="helix" evidence="16">
    <location>
        <begin position="162"/>
        <end position="168"/>
    </location>
</feature>
<feature type="turn" evidence="16">
    <location>
        <begin position="171"/>
        <end position="173"/>
    </location>
</feature>
<feature type="helix" evidence="16">
    <location>
        <begin position="187"/>
        <end position="196"/>
    </location>
</feature>
<feature type="helix" evidence="16">
    <location>
        <begin position="202"/>
        <end position="204"/>
    </location>
</feature>
<feature type="strand" evidence="16">
    <location>
        <begin position="227"/>
        <end position="230"/>
    </location>
</feature>
<feature type="helix" evidence="16">
    <location>
        <begin position="237"/>
        <end position="247"/>
    </location>
</feature>
<feature type="strand" evidence="16">
    <location>
        <begin position="249"/>
        <end position="254"/>
    </location>
</feature>
<feature type="helix" evidence="16">
    <location>
        <begin position="259"/>
        <end position="262"/>
    </location>
</feature>
<feature type="strand" evidence="16">
    <location>
        <begin position="266"/>
        <end position="269"/>
    </location>
</feature>
<feature type="strand" evidence="16">
    <location>
        <begin position="281"/>
        <end position="291"/>
    </location>
</feature>
<feature type="strand" evidence="16">
    <location>
        <begin position="294"/>
        <end position="300"/>
    </location>
</feature>
<feature type="turn" evidence="16">
    <location>
        <begin position="305"/>
        <end position="308"/>
    </location>
</feature>
<feature type="strand" evidence="16">
    <location>
        <begin position="312"/>
        <end position="319"/>
    </location>
</feature>
<feature type="helix" evidence="16">
    <location>
        <begin position="321"/>
        <end position="323"/>
    </location>
</feature>
<feature type="turn" evidence="16">
    <location>
        <begin position="324"/>
        <end position="326"/>
    </location>
</feature>
<feature type="strand" evidence="16">
    <location>
        <begin position="329"/>
        <end position="332"/>
    </location>
</feature>